<sequence length="236" mass="25769">MDAVLYSVPLSFTPLRASSSPSSPYLLLPRFLSVQPCHKFTFSRSFPSKSRIPSASSAAGSTLMTNSSSPRSGVYTVGEFMTKKEDLHVVKPTTTVDEALELLVENRITGFPVIDEDWKLVGLVSDYDLLALDSISGSGRTENSMFPEVDSTWKTFNAVQKLLSKTNGKLVGDLMTPAPLVVEEKTNLEDAAKILLETKYRRLPVVDSDGKLVGIITRGNVVRAALQIKRSGDRNA</sequence>
<reference key="1">
    <citation type="journal article" date="1998" name="Nature">
        <title>Analysis of 1.9 Mb of contiguous sequence from chromosome 4 of Arabidopsis thaliana.</title>
        <authorList>
            <person name="Bevan M."/>
            <person name="Bancroft I."/>
            <person name="Bent E."/>
            <person name="Love K."/>
            <person name="Goodman H.M."/>
            <person name="Dean C."/>
            <person name="Bergkamp R."/>
            <person name="Dirkse W."/>
            <person name="van Staveren M."/>
            <person name="Stiekema W."/>
            <person name="Drost L."/>
            <person name="Ridley P."/>
            <person name="Hudson S.-A."/>
            <person name="Patel K."/>
            <person name="Murphy G."/>
            <person name="Piffanelli P."/>
            <person name="Wedler H."/>
            <person name="Wedler E."/>
            <person name="Wambutt R."/>
            <person name="Weitzenegger T."/>
            <person name="Pohl T."/>
            <person name="Terryn N."/>
            <person name="Gielen J."/>
            <person name="Villarroel R."/>
            <person name="De Clercq R."/>
            <person name="van Montagu M."/>
            <person name="Lecharny A."/>
            <person name="Aubourg S."/>
            <person name="Gy I."/>
            <person name="Kreis M."/>
            <person name="Lao N."/>
            <person name="Kavanagh T."/>
            <person name="Hempel S."/>
            <person name="Kotter P."/>
            <person name="Entian K.-D."/>
            <person name="Rieger M."/>
            <person name="Schaefer M."/>
            <person name="Funk B."/>
            <person name="Mueller-Auer S."/>
            <person name="Silvey M."/>
            <person name="James R."/>
            <person name="Monfort A."/>
            <person name="Pons A."/>
            <person name="Puigdomenech P."/>
            <person name="Douka A."/>
            <person name="Voukelatou E."/>
            <person name="Milioni D."/>
            <person name="Hatzopoulos P."/>
            <person name="Piravandi E."/>
            <person name="Obermaier B."/>
            <person name="Hilbert H."/>
            <person name="Duesterhoeft A."/>
            <person name="Moores T."/>
            <person name="Jones J.D.G."/>
            <person name="Eneva T."/>
            <person name="Palme K."/>
            <person name="Benes V."/>
            <person name="Rechmann S."/>
            <person name="Ansorge W."/>
            <person name="Cooke R."/>
            <person name="Berger C."/>
            <person name="Delseny M."/>
            <person name="Voet M."/>
            <person name="Volckaert G."/>
            <person name="Mewes H.-W."/>
            <person name="Klosterman S."/>
            <person name="Schueller C."/>
            <person name="Chalwatzis N."/>
        </authorList>
    </citation>
    <scope>NUCLEOTIDE SEQUENCE [LARGE SCALE GENOMIC DNA]</scope>
    <source>
        <strain>cv. Columbia</strain>
    </source>
</reference>
<reference key="2">
    <citation type="journal article" date="1999" name="Nature">
        <title>Sequence and analysis of chromosome 4 of the plant Arabidopsis thaliana.</title>
        <authorList>
            <person name="Mayer K.F.X."/>
            <person name="Schueller C."/>
            <person name="Wambutt R."/>
            <person name="Murphy G."/>
            <person name="Volckaert G."/>
            <person name="Pohl T."/>
            <person name="Duesterhoeft A."/>
            <person name="Stiekema W."/>
            <person name="Entian K.-D."/>
            <person name="Terryn N."/>
            <person name="Harris B."/>
            <person name="Ansorge W."/>
            <person name="Brandt P."/>
            <person name="Grivell L.A."/>
            <person name="Rieger M."/>
            <person name="Weichselgartner M."/>
            <person name="de Simone V."/>
            <person name="Obermaier B."/>
            <person name="Mache R."/>
            <person name="Mueller M."/>
            <person name="Kreis M."/>
            <person name="Delseny M."/>
            <person name="Puigdomenech P."/>
            <person name="Watson M."/>
            <person name="Schmidtheini T."/>
            <person name="Reichert B."/>
            <person name="Portetelle D."/>
            <person name="Perez-Alonso M."/>
            <person name="Boutry M."/>
            <person name="Bancroft I."/>
            <person name="Vos P."/>
            <person name="Hoheisel J."/>
            <person name="Zimmermann W."/>
            <person name="Wedler H."/>
            <person name="Ridley P."/>
            <person name="Langham S.-A."/>
            <person name="McCullagh B."/>
            <person name="Bilham L."/>
            <person name="Robben J."/>
            <person name="van der Schueren J."/>
            <person name="Grymonprez B."/>
            <person name="Chuang Y.-J."/>
            <person name="Vandenbussche F."/>
            <person name="Braeken M."/>
            <person name="Weltjens I."/>
            <person name="Voet M."/>
            <person name="Bastiaens I."/>
            <person name="Aert R."/>
            <person name="Defoor E."/>
            <person name="Weitzenegger T."/>
            <person name="Bothe G."/>
            <person name="Ramsperger U."/>
            <person name="Hilbert H."/>
            <person name="Braun M."/>
            <person name="Holzer E."/>
            <person name="Brandt A."/>
            <person name="Peters S."/>
            <person name="van Staveren M."/>
            <person name="Dirkse W."/>
            <person name="Mooijman P."/>
            <person name="Klein Lankhorst R."/>
            <person name="Rose M."/>
            <person name="Hauf J."/>
            <person name="Koetter P."/>
            <person name="Berneiser S."/>
            <person name="Hempel S."/>
            <person name="Feldpausch M."/>
            <person name="Lamberth S."/>
            <person name="Van den Daele H."/>
            <person name="De Keyser A."/>
            <person name="Buysshaert C."/>
            <person name="Gielen J."/>
            <person name="Villarroel R."/>
            <person name="De Clercq R."/>
            <person name="van Montagu M."/>
            <person name="Rogers J."/>
            <person name="Cronin A."/>
            <person name="Quail M.A."/>
            <person name="Bray-Allen S."/>
            <person name="Clark L."/>
            <person name="Doggett J."/>
            <person name="Hall S."/>
            <person name="Kay M."/>
            <person name="Lennard N."/>
            <person name="McLay K."/>
            <person name="Mayes R."/>
            <person name="Pettett A."/>
            <person name="Rajandream M.A."/>
            <person name="Lyne M."/>
            <person name="Benes V."/>
            <person name="Rechmann S."/>
            <person name="Borkova D."/>
            <person name="Bloecker H."/>
            <person name="Scharfe M."/>
            <person name="Grimm M."/>
            <person name="Loehnert T.-H."/>
            <person name="Dose S."/>
            <person name="de Haan M."/>
            <person name="Maarse A.C."/>
            <person name="Schaefer M."/>
            <person name="Mueller-Auer S."/>
            <person name="Gabel C."/>
            <person name="Fuchs M."/>
            <person name="Fartmann B."/>
            <person name="Granderath K."/>
            <person name="Dauner D."/>
            <person name="Herzl A."/>
            <person name="Neumann S."/>
            <person name="Argiriou A."/>
            <person name="Vitale D."/>
            <person name="Liguori R."/>
            <person name="Piravandi E."/>
            <person name="Massenet O."/>
            <person name="Quigley F."/>
            <person name="Clabauld G."/>
            <person name="Muendlein A."/>
            <person name="Felber R."/>
            <person name="Schnabl S."/>
            <person name="Hiller R."/>
            <person name="Schmidt W."/>
            <person name="Lecharny A."/>
            <person name="Aubourg S."/>
            <person name="Chefdor F."/>
            <person name="Cooke R."/>
            <person name="Berger C."/>
            <person name="Monfort A."/>
            <person name="Casacuberta E."/>
            <person name="Gibbons T."/>
            <person name="Weber N."/>
            <person name="Vandenbol M."/>
            <person name="Bargues M."/>
            <person name="Terol J."/>
            <person name="Torres A."/>
            <person name="Perez-Perez A."/>
            <person name="Purnelle B."/>
            <person name="Bent E."/>
            <person name="Johnson S."/>
            <person name="Tacon D."/>
            <person name="Jesse T."/>
            <person name="Heijnen L."/>
            <person name="Schwarz S."/>
            <person name="Scholler P."/>
            <person name="Heber S."/>
            <person name="Francs P."/>
            <person name="Bielke C."/>
            <person name="Frishman D."/>
            <person name="Haase D."/>
            <person name="Lemcke K."/>
            <person name="Mewes H.-W."/>
            <person name="Stocker S."/>
            <person name="Zaccaria P."/>
            <person name="Bevan M."/>
            <person name="Wilson R.K."/>
            <person name="de la Bastide M."/>
            <person name="Habermann K."/>
            <person name="Parnell L."/>
            <person name="Dedhia N."/>
            <person name="Gnoj L."/>
            <person name="Schutz K."/>
            <person name="Huang E."/>
            <person name="Spiegel L."/>
            <person name="Sekhon M."/>
            <person name="Murray J."/>
            <person name="Sheet P."/>
            <person name="Cordes M."/>
            <person name="Abu-Threideh J."/>
            <person name="Stoneking T."/>
            <person name="Kalicki J."/>
            <person name="Graves T."/>
            <person name="Harmon G."/>
            <person name="Edwards J."/>
            <person name="Latreille P."/>
            <person name="Courtney L."/>
            <person name="Cloud J."/>
            <person name="Abbott A."/>
            <person name="Scott K."/>
            <person name="Johnson D."/>
            <person name="Minx P."/>
            <person name="Bentley D."/>
            <person name="Fulton B."/>
            <person name="Miller N."/>
            <person name="Greco T."/>
            <person name="Kemp K."/>
            <person name="Kramer J."/>
            <person name="Fulton L."/>
            <person name="Mardis E."/>
            <person name="Dante M."/>
            <person name="Pepin K."/>
            <person name="Hillier L.W."/>
            <person name="Nelson J."/>
            <person name="Spieth J."/>
            <person name="Ryan E."/>
            <person name="Andrews S."/>
            <person name="Geisel C."/>
            <person name="Layman D."/>
            <person name="Du H."/>
            <person name="Ali J."/>
            <person name="Berghoff A."/>
            <person name="Jones K."/>
            <person name="Drone K."/>
            <person name="Cotton M."/>
            <person name="Joshu C."/>
            <person name="Antonoiu B."/>
            <person name="Zidanic M."/>
            <person name="Strong C."/>
            <person name="Sun H."/>
            <person name="Lamar B."/>
            <person name="Yordan C."/>
            <person name="Ma P."/>
            <person name="Zhong J."/>
            <person name="Preston R."/>
            <person name="Vil D."/>
            <person name="Shekher M."/>
            <person name="Matero A."/>
            <person name="Shah R."/>
            <person name="Swaby I.K."/>
            <person name="O'Shaughnessy A."/>
            <person name="Rodriguez M."/>
            <person name="Hoffman J."/>
            <person name="Till S."/>
            <person name="Granat S."/>
            <person name="Shohdy N."/>
            <person name="Hasegawa A."/>
            <person name="Hameed A."/>
            <person name="Lodhi M."/>
            <person name="Johnson A."/>
            <person name="Chen E."/>
            <person name="Marra M.A."/>
            <person name="Martienssen R."/>
            <person name="McCombie W.R."/>
        </authorList>
    </citation>
    <scope>NUCLEOTIDE SEQUENCE [LARGE SCALE GENOMIC DNA]</scope>
    <source>
        <strain>cv. Columbia</strain>
    </source>
</reference>
<reference key="3">
    <citation type="journal article" date="2017" name="Plant J.">
        <title>Araport11: a complete reannotation of the Arabidopsis thaliana reference genome.</title>
        <authorList>
            <person name="Cheng C.Y."/>
            <person name="Krishnakumar V."/>
            <person name="Chan A.P."/>
            <person name="Thibaud-Nissen F."/>
            <person name="Schobel S."/>
            <person name="Town C.D."/>
        </authorList>
    </citation>
    <scope>GENOME REANNOTATION</scope>
    <source>
        <strain>cv. Columbia</strain>
    </source>
</reference>
<reference key="4">
    <citation type="submission" date="2002-03" db="EMBL/GenBank/DDBJ databases">
        <title>Full-length cDNA from Arabidopsis thaliana.</title>
        <authorList>
            <person name="Brover V.V."/>
            <person name="Troukhan M.E."/>
            <person name="Alexandrov N.A."/>
            <person name="Lu Y.-P."/>
            <person name="Flavell R.B."/>
            <person name="Feldmann K.A."/>
        </authorList>
    </citation>
    <scope>NUCLEOTIDE SEQUENCE [LARGE SCALE MRNA]</scope>
</reference>
<reference key="5">
    <citation type="journal article" date="2003" name="Science">
        <title>Empirical analysis of transcriptional activity in the Arabidopsis genome.</title>
        <authorList>
            <person name="Yamada K."/>
            <person name="Lim J."/>
            <person name="Dale J.M."/>
            <person name="Chen H."/>
            <person name="Shinn P."/>
            <person name="Palm C.J."/>
            <person name="Southwick A.M."/>
            <person name="Wu H.C."/>
            <person name="Kim C.J."/>
            <person name="Nguyen M."/>
            <person name="Pham P.K."/>
            <person name="Cheuk R.F."/>
            <person name="Karlin-Newmann G."/>
            <person name="Liu S.X."/>
            <person name="Lam B."/>
            <person name="Sakano H."/>
            <person name="Wu T."/>
            <person name="Yu G."/>
            <person name="Miranda M."/>
            <person name="Quach H.L."/>
            <person name="Tripp M."/>
            <person name="Chang C.H."/>
            <person name="Lee J.M."/>
            <person name="Toriumi M.J."/>
            <person name="Chan M.M."/>
            <person name="Tang C.C."/>
            <person name="Onodera C.S."/>
            <person name="Deng J.M."/>
            <person name="Akiyama K."/>
            <person name="Ansari Y."/>
            <person name="Arakawa T."/>
            <person name="Banh J."/>
            <person name="Banno F."/>
            <person name="Bowser L."/>
            <person name="Brooks S.Y."/>
            <person name="Carninci P."/>
            <person name="Chao Q."/>
            <person name="Choy N."/>
            <person name="Enju A."/>
            <person name="Goldsmith A.D."/>
            <person name="Gurjal M."/>
            <person name="Hansen N.F."/>
            <person name="Hayashizaki Y."/>
            <person name="Johnson-Hopson C."/>
            <person name="Hsuan V.W."/>
            <person name="Iida K."/>
            <person name="Karnes M."/>
            <person name="Khan S."/>
            <person name="Koesema E."/>
            <person name="Ishida J."/>
            <person name="Jiang P.X."/>
            <person name="Jones T."/>
            <person name="Kawai J."/>
            <person name="Kamiya A."/>
            <person name="Meyers C."/>
            <person name="Nakajima M."/>
            <person name="Narusaka M."/>
            <person name="Seki M."/>
            <person name="Sakurai T."/>
            <person name="Satou M."/>
            <person name="Tamse R."/>
            <person name="Vaysberg M."/>
            <person name="Wallender E.K."/>
            <person name="Wong C."/>
            <person name="Yamamura Y."/>
            <person name="Yuan S."/>
            <person name="Shinozaki K."/>
            <person name="Davis R.W."/>
            <person name="Theologis A."/>
            <person name="Ecker J.R."/>
        </authorList>
    </citation>
    <scope>NUCLEOTIDE SEQUENCE [LARGE SCALE MRNA]</scope>
    <source>
        <strain>cv. Columbia</strain>
    </source>
</reference>
<reference key="6">
    <citation type="journal article" date="2008" name="Acta Crystallogr. F">
        <title>Purification, crystallization and preliminary X-ray diffraction analysis of a cystathionine beta-synthase domain-containing protein, CDCP2, from Arabidopsis thaliana.</title>
        <authorList>
            <person name="Jeong B.C."/>
            <person name="Yoo K.S."/>
            <person name="Jung K.W."/>
            <person name="Shin J.S."/>
            <person name="Song H.K."/>
        </authorList>
    </citation>
    <scope>CRYSTALLIZATION</scope>
</reference>
<reference key="7">
    <citation type="journal article" date="2008" name="PLoS ONE">
        <title>Sorting signals, N-terminal modifications and abundance of the chloroplast proteome.</title>
        <authorList>
            <person name="Zybailov B."/>
            <person name="Rutschow H."/>
            <person name="Friso G."/>
            <person name="Rudella A."/>
            <person name="Emanuelsson O."/>
            <person name="Sun Q."/>
            <person name="van Wijk K.J."/>
        </authorList>
    </citation>
    <scope>IDENTIFICATION BY MASS SPECTROMETRY</scope>
    <scope>SUBCELLULAR LOCATION [LARGE SCALE ANALYSIS]</scope>
</reference>
<reference key="8">
    <citation type="journal article" date="2009" name="BMC Genomics">
        <title>Genome wide expression analysis of CBS domain containing proteins in Arabidopsis thaliana (L.) Heynh and Oryza sativa L. reveals their developmental and stress regulation.</title>
        <authorList>
            <person name="Kushwaha H.R."/>
            <person name="Singh A.K."/>
            <person name="Sopory S.K."/>
            <person name="Singla-Pareek S.L."/>
            <person name="Pareek A."/>
        </authorList>
    </citation>
    <scope>GENE FAMILY</scope>
    <scope>NOMENCLATURE</scope>
</reference>
<reference key="9">
    <citation type="journal article" date="2012" name="Mol. Cell. Proteomics">
        <title>Comparative large-scale characterisation of plant vs. mammal proteins reveals similar and idiosyncratic N-alpha acetylation features.</title>
        <authorList>
            <person name="Bienvenut W.V."/>
            <person name="Sumpton D."/>
            <person name="Martinez A."/>
            <person name="Lilla S."/>
            <person name="Espagne C."/>
            <person name="Meinnel T."/>
            <person name="Giglione C."/>
        </authorList>
    </citation>
    <scope>ACETYLATION [LARGE SCALE ANALYSIS] AT SER-54</scope>
    <scope>CLEAVAGE OF TRANSIT PEPTIDE [LARGE SCALE ANALYSIS] AFTER PRO-53</scope>
    <scope>IDENTIFICATION BY MASS SPECTROMETRY [LARGE SCALE ANALYSIS]</scope>
</reference>
<name>CBSX1_ARATH</name>
<gene>
    <name type="primary">CBSX1</name>
    <name type="synonym">CDCP2</name>
    <name type="ordered locus">At4g36910</name>
    <name type="ORF">AP22.61</name>
    <name type="ORF">C7A10.450</name>
</gene>
<proteinExistence type="evidence at protein level"/>
<comment type="subcellular location">
    <subcellularLocation>
        <location evidence="3">Plastid</location>
        <location evidence="3">Chloroplast</location>
    </subcellularLocation>
</comment>
<organism>
    <name type="scientific">Arabidopsis thaliana</name>
    <name type="common">Mouse-ear cress</name>
    <dbReference type="NCBI Taxonomy" id="3702"/>
    <lineage>
        <taxon>Eukaryota</taxon>
        <taxon>Viridiplantae</taxon>
        <taxon>Streptophyta</taxon>
        <taxon>Embryophyta</taxon>
        <taxon>Tracheophyta</taxon>
        <taxon>Spermatophyta</taxon>
        <taxon>Magnoliopsida</taxon>
        <taxon>eudicotyledons</taxon>
        <taxon>Gunneridae</taxon>
        <taxon>Pentapetalae</taxon>
        <taxon>rosids</taxon>
        <taxon>malvids</taxon>
        <taxon>Brassicales</taxon>
        <taxon>Brassicaceae</taxon>
        <taxon>Camelineae</taxon>
        <taxon>Arabidopsis</taxon>
    </lineage>
</organism>
<evidence type="ECO:0000255" key="1">
    <source>
        <dbReference type="PROSITE-ProRule" id="PRU00703"/>
    </source>
</evidence>
<evidence type="ECO:0000256" key="2">
    <source>
        <dbReference type="SAM" id="MobiDB-lite"/>
    </source>
</evidence>
<evidence type="ECO:0000269" key="3">
    <source>
    </source>
</evidence>
<evidence type="ECO:0007744" key="4">
    <source>
    </source>
</evidence>
<evidence type="ECO:0007829" key="5">
    <source>
        <dbReference type="PDB" id="4GQW"/>
    </source>
</evidence>
<keyword id="KW-0002">3D-structure</keyword>
<keyword id="KW-0007">Acetylation</keyword>
<keyword id="KW-0129">CBS domain</keyword>
<keyword id="KW-0150">Chloroplast</keyword>
<keyword id="KW-0934">Plastid</keyword>
<keyword id="KW-1185">Reference proteome</keyword>
<keyword id="KW-0677">Repeat</keyword>
<keyword id="KW-0809">Transit peptide</keyword>
<dbReference type="EMBL" id="Z99707">
    <property type="protein sequence ID" value="CAB16799.1"/>
    <property type="molecule type" value="Genomic_DNA"/>
</dbReference>
<dbReference type="EMBL" id="AL161590">
    <property type="protein sequence ID" value="CAB80357.1"/>
    <property type="molecule type" value="Genomic_DNA"/>
</dbReference>
<dbReference type="EMBL" id="CP002687">
    <property type="protein sequence ID" value="AEE86716.1"/>
    <property type="molecule type" value="Genomic_DNA"/>
</dbReference>
<dbReference type="EMBL" id="AY085164">
    <property type="protein sequence ID" value="AAM61717.1"/>
    <property type="molecule type" value="mRNA"/>
</dbReference>
<dbReference type="EMBL" id="BT003835">
    <property type="protein sequence ID" value="AAO41886.1"/>
    <property type="molecule type" value="mRNA"/>
</dbReference>
<dbReference type="EMBL" id="BT005190">
    <property type="protein sequence ID" value="AAO50723.1"/>
    <property type="molecule type" value="mRNA"/>
</dbReference>
<dbReference type="PIR" id="H85435">
    <property type="entry name" value="H85435"/>
</dbReference>
<dbReference type="RefSeq" id="NP_195409.1">
    <property type="nucleotide sequence ID" value="NM_119855.4"/>
</dbReference>
<dbReference type="PDB" id="4GQV">
    <property type="method" value="X-ray"/>
    <property type="resolution" value="2.39 A"/>
    <property type="chains" value="A=72-236"/>
</dbReference>
<dbReference type="PDB" id="4GQW">
    <property type="method" value="X-ray"/>
    <property type="resolution" value="2.20 A"/>
    <property type="chains" value="A=72-134, A=150-236"/>
</dbReference>
<dbReference type="PDBsum" id="4GQV"/>
<dbReference type="PDBsum" id="4GQW"/>
<dbReference type="SMR" id="O23193"/>
<dbReference type="BioGRID" id="15125">
    <property type="interactions" value="4"/>
</dbReference>
<dbReference type="FunCoup" id="O23193">
    <property type="interactions" value="11"/>
</dbReference>
<dbReference type="IntAct" id="O23193">
    <property type="interactions" value="4"/>
</dbReference>
<dbReference type="STRING" id="3702.O23193"/>
<dbReference type="iPTMnet" id="O23193"/>
<dbReference type="PaxDb" id="3702-AT4G36910.1"/>
<dbReference type="ProteomicsDB" id="239097"/>
<dbReference type="EnsemblPlants" id="AT4G36910.1">
    <property type="protein sequence ID" value="AT4G36910.1"/>
    <property type="gene ID" value="AT4G36910"/>
</dbReference>
<dbReference type="GeneID" id="829844"/>
<dbReference type="Gramene" id="AT4G36910.1">
    <property type="protein sequence ID" value="AT4G36910.1"/>
    <property type="gene ID" value="AT4G36910"/>
</dbReference>
<dbReference type="KEGG" id="ath:AT4G36910"/>
<dbReference type="Araport" id="AT4G36910"/>
<dbReference type="TAIR" id="AT4G36910">
    <property type="gene designation" value="LEJ2"/>
</dbReference>
<dbReference type="eggNOG" id="ENOG502QTH1">
    <property type="taxonomic scope" value="Eukaryota"/>
</dbReference>
<dbReference type="HOGENOM" id="CLU_040681_4_0_1"/>
<dbReference type="InParanoid" id="O23193"/>
<dbReference type="OMA" id="ENSMFPE"/>
<dbReference type="PhylomeDB" id="O23193"/>
<dbReference type="EvolutionaryTrace" id="O23193"/>
<dbReference type="PRO" id="PR:O23193"/>
<dbReference type="Proteomes" id="UP000006548">
    <property type="component" value="Chromosome 4"/>
</dbReference>
<dbReference type="ExpressionAtlas" id="O23193">
    <property type="expression patterns" value="baseline and differential"/>
</dbReference>
<dbReference type="GO" id="GO:0009507">
    <property type="term" value="C:chloroplast"/>
    <property type="evidence" value="ECO:0000314"/>
    <property type="project" value="TAIR"/>
</dbReference>
<dbReference type="GO" id="GO:0045454">
    <property type="term" value="P:cell redox homeostasis"/>
    <property type="evidence" value="ECO:0000314"/>
    <property type="project" value="TAIR"/>
</dbReference>
<dbReference type="CDD" id="cd17789">
    <property type="entry name" value="CBS_pair_plant_CBSX"/>
    <property type="match status" value="1"/>
</dbReference>
<dbReference type="Gene3D" id="3.10.580.10">
    <property type="entry name" value="CBS-domain"/>
    <property type="match status" value="1"/>
</dbReference>
<dbReference type="InterPro" id="IPR000644">
    <property type="entry name" value="CBS_dom"/>
</dbReference>
<dbReference type="InterPro" id="IPR046342">
    <property type="entry name" value="CBS_dom_sf"/>
</dbReference>
<dbReference type="InterPro" id="IPR051462">
    <property type="entry name" value="CBS_domain-containing"/>
</dbReference>
<dbReference type="PANTHER" id="PTHR48108:SF6">
    <property type="entry name" value="CBS DOMAIN-CONTAINING PROTEIN CBSX1, CHLOROPLASTIC"/>
    <property type="match status" value="1"/>
</dbReference>
<dbReference type="PANTHER" id="PTHR48108">
    <property type="entry name" value="CBS DOMAIN-CONTAINING PROTEIN CBSX2, CHLOROPLASTIC"/>
    <property type="match status" value="1"/>
</dbReference>
<dbReference type="Pfam" id="PF00571">
    <property type="entry name" value="CBS"/>
    <property type="match status" value="2"/>
</dbReference>
<dbReference type="SMART" id="SM00116">
    <property type="entry name" value="CBS"/>
    <property type="match status" value="2"/>
</dbReference>
<dbReference type="SUPFAM" id="SSF54631">
    <property type="entry name" value="CBS-domain pair"/>
    <property type="match status" value="1"/>
</dbReference>
<dbReference type="PROSITE" id="PS51371">
    <property type="entry name" value="CBS"/>
    <property type="match status" value="2"/>
</dbReference>
<feature type="transit peptide" description="Chloroplast" evidence="4">
    <location>
        <begin position="1"/>
        <end position="53"/>
    </location>
</feature>
<feature type="chain" id="PRO_0000403988" description="CBS domain-containing protein CBSX1, chloroplastic">
    <location>
        <begin position="54"/>
        <end position="236"/>
    </location>
</feature>
<feature type="domain" description="CBS 1" evidence="1">
    <location>
        <begin position="81"/>
        <end position="142"/>
    </location>
</feature>
<feature type="domain" description="CBS 2" evidence="1">
    <location>
        <begin position="175"/>
        <end position="231"/>
    </location>
</feature>
<feature type="region of interest" description="Disordered" evidence="2">
    <location>
        <begin position="47"/>
        <end position="66"/>
    </location>
</feature>
<feature type="modified residue" description="N-acetylserine" evidence="4">
    <location>
        <position position="54"/>
    </location>
</feature>
<feature type="helix" evidence="5">
    <location>
        <begin position="77"/>
        <end position="79"/>
    </location>
</feature>
<feature type="strand" evidence="5">
    <location>
        <begin position="81"/>
        <end position="84"/>
    </location>
</feature>
<feature type="helix" evidence="5">
    <location>
        <begin position="96"/>
        <end position="105"/>
    </location>
</feature>
<feature type="strand" evidence="5">
    <location>
        <begin position="109"/>
        <end position="114"/>
    </location>
</feature>
<feature type="strand" evidence="5">
    <location>
        <begin position="119"/>
        <end position="125"/>
    </location>
</feature>
<feature type="helix" evidence="5">
    <location>
        <begin position="126"/>
        <end position="129"/>
    </location>
</feature>
<feature type="helix" evidence="5">
    <location>
        <begin position="154"/>
        <end position="160"/>
    </location>
</feature>
<feature type="helix" evidence="5">
    <location>
        <begin position="171"/>
        <end position="174"/>
    </location>
</feature>
<feature type="strand" evidence="5">
    <location>
        <begin position="175"/>
        <end position="178"/>
    </location>
</feature>
<feature type="strand" evidence="5">
    <location>
        <begin position="182"/>
        <end position="187"/>
    </location>
</feature>
<feature type="helix" evidence="5">
    <location>
        <begin position="188"/>
        <end position="197"/>
    </location>
</feature>
<feature type="strand" evidence="5">
    <location>
        <begin position="202"/>
        <end position="206"/>
    </location>
</feature>
<feature type="strand" evidence="5">
    <location>
        <begin position="210"/>
        <end position="217"/>
    </location>
</feature>
<feature type="helix" evidence="5">
    <location>
        <begin position="218"/>
        <end position="226"/>
    </location>
</feature>
<protein>
    <recommendedName>
        <fullName>CBS domain-containing protein CBSX1, chloroplastic</fullName>
    </recommendedName>
    <alternativeName>
        <fullName>CBS domain-containing protein 2</fullName>
        <shortName>AtCDCP2</shortName>
    </alternativeName>
    <alternativeName>
        <fullName>Protein LOSS OF THE TIMING OF ET AND JA BIOSYNTHESIS 2</fullName>
        <shortName>AtLEJ2</shortName>
    </alternativeName>
</protein>
<accession>O23193</accession>